<reference key="1">
    <citation type="journal article" date="1999" name="Nature">
        <title>Sequence and analysis of chromosome 4 of the plant Arabidopsis thaliana.</title>
        <authorList>
            <person name="Mayer K.F.X."/>
            <person name="Schueller C."/>
            <person name="Wambutt R."/>
            <person name="Murphy G."/>
            <person name="Volckaert G."/>
            <person name="Pohl T."/>
            <person name="Duesterhoeft A."/>
            <person name="Stiekema W."/>
            <person name="Entian K.-D."/>
            <person name="Terryn N."/>
            <person name="Harris B."/>
            <person name="Ansorge W."/>
            <person name="Brandt P."/>
            <person name="Grivell L.A."/>
            <person name="Rieger M."/>
            <person name="Weichselgartner M."/>
            <person name="de Simone V."/>
            <person name="Obermaier B."/>
            <person name="Mache R."/>
            <person name="Mueller M."/>
            <person name="Kreis M."/>
            <person name="Delseny M."/>
            <person name="Puigdomenech P."/>
            <person name="Watson M."/>
            <person name="Schmidtheini T."/>
            <person name="Reichert B."/>
            <person name="Portetelle D."/>
            <person name="Perez-Alonso M."/>
            <person name="Boutry M."/>
            <person name="Bancroft I."/>
            <person name="Vos P."/>
            <person name="Hoheisel J."/>
            <person name="Zimmermann W."/>
            <person name="Wedler H."/>
            <person name="Ridley P."/>
            <person name="Langham S.-A."/>
            <person name="McCullagh B."/>
            <person name="Bilham L."/>
            <person name="Robben J."/>
            <person name="van der Schueren J."/>
            <person name="Grymonprez B."/>
            <person name="Chuang Y.-J."/>
            <person name="Vandenbussche F."/>
            <person name="Braeken M."/>
            <person name="Weltjens I."/>
            <person name="Voet M."/>
            <person name="Bastiaens I."/>
            <person name="Aert R."/>
            <person name="Defoor E."/>
            <person name="Weitzenegger T."/>
            <person name="Bothe G."/>
            <person name="Ramsperger U."/>
            <person name="Hilbert H."/>
            <person name="Braun M."/>
            <person name="Holzer E."/>
            <person name="Brandt A."/>
            <person name="Peters S."/>
            <person name="van Staveren M."/>
            <person name="Dirkse W."/>
            <person name="Mooijman P."/>
            <person name="Klein Lankhorst R."/>
            <person name="Rose M."/>
            <person name="Hauf J."/>
            <person name="Koetter P."/>
            <person name="Berneiser S."/>
            <person name="Hempel S."/>
            <person name="Feldpausch M."/>
            <person name="Lamberth S."/>
            <person name="Van den Daele H."/>
            <person name="De Keyser A."/>
            <person name="Buysshaert C."/>
            <person name="Gielen J."/>
            <person name="Villarroel R."/>
            <person name="De Clercq R."/>
            <person name="van Montagu M."/>
            <person name="Rogers J."/>
            <person name="Cronin A."/>
            <person name="Quail M.A."/>
            <person name="Bray-Allen S."/>
            <person name="Clark L."/>
            <person name="Doggett J."/>
            <person name="Hall S."/>
            <person name="Kay M."/>
            <person name="Lennard N."/>
            <person name="McLay K."/>
            <person name="Mayes R."/>
            <person name="Pettett A."/>
            <person name="Rajandream M.A."/>
            <person name="Lyne M."/>
            <person name="Benes V."/>
            <person name="Rechmann S."/>
            <person name="Borkova D."/>
            <person name="Bloecker H."/>
            <person name="Scharfe M."/>
            <person name="Grimm M."/>
            <person name="Loehnert T.-H."/>
            <person name="Dose S."/>
            <person name="de Haan M."/>
            <person name="Maarse A.C."/>
            <person name="Schaefer M."/>
            <person name="Mueller-Auer S."/>
            <person name="Gabel C."/>
            <person name="Fuchs M."/>
            <person name="Fartmann B."/>
            <person name="Granderath K."/>
            <person name="Dauner D."/>
            <person name="Herzl A."/>
            <person name="Neumann S."/>
            <person name="Argiriou A."/>
            <person name="Vitale D."/>
            <person name="Liguori R."/>
            <person name="Piravandi E."/>
            <person name="Massenet O."/>
            <person name="Quigley F."/>
            <person name="Clabauld G."/>
            <person name="Muendlein A."/>
            <person name="Felber R."/>
            <person name="Schnabl S."/>
            <person name="Hiller R."/>
            <person name="Schmidt W."/>
            <person name="Lecharny A."/>
            <person name="Aubourg S."/>
            <person name="Chefdor F."/>
            <person name="Cooke R."/>
            <person name="Berger C."/>
            <person name="Monfort A."/>
            <person name="Casacuberta E."/>
            <person name="Gibbons T."/>
            <person name="Weber N."/>
            <person name="Vandenbol M."/>
            <person name="Bargues M."/>
            <person name="Terol J."/>
            <person name="Torres A."/>
            <person name="Perez-Perez A."/>
            <person name="Purnelle B."/>
            <person name="Bent E."/>
            <person name="Johnson S."/>
            <person name="Tacon D."/>
            <person name="Jesse T."/>
            <person name="Heijnen L."/>
            <person name="Schwarz S."/>
            <person name="Scholler P."/>
            <person name="Heber S."/>
            <person name="Francs P."/>
            <person name="Bielke C."/>
            <person name="Frishman D."/>
            <person name="Haase D."/>
            <person name="Lemcke K."/>
            <person name="Mewes H.-W."/>
            <person name="Stocker S."/>
            <person name="Zaccaria P."/>
            <person name="Bevan M."/>
            <person name="Wilson R.K."/>
            <person name="de la Bastide M."/>
            <person name="Habermann K."/>
            <person name="Parnell L."/>
            <person name="Dedhia N."/>
            <person name="Gnoj L."/>
            <person name="Schutz K."/>
            <person name="Huang E."/>
            <person name="Spiegel L."/>
            <person name="Sekhon M."/>
            <person name="Murray J."/>
            <person name="Sheet P."/>
            <person name="Cordes M."/>
            <person name="Abu-Threideh J."/>
            <person name="Stoneking T."/>
            <person name="Kalicki J."/>
            <person name="Graves T."/>
            <person name="Harmon G."/>
            <person name="Edwards J."/>
            <person name="Latreille P."/>
            <person name="Courtney L."/>
            <person name="Cloud J."/>
            <person name="Abbott A."/>
            <person name="Scott K."/>
            <person name="Johnson D."/>
            <person name="Minx P."/>
            <person name="Bentley D."/>
            <person name="Fulton B."/>
            <person name="Miller N."/>
            <person name="Greco T."/>
            <person name="Kemp K."/>
            <person name="Kramer J."/>
            <person name="Fulton L."/>
            <person name="Mardis E."/>
            <person name="Dante M."/>
            <person name="Pepin K."/>
            <person name="Hillier L.W."/>
            <person name="Nelson J."/>
            <person name="Spieth J."/>
            <person name="Ryan E."/>
            <person name="Andrews S."/>
            <person name="Geisel C."/>
            <person name="Layman D."/>
            <person name="Du H."/>
            <person name="Ali J."/>
            <person name="Berghoff A."/>
            <person name="Jones K."/>
            <person name="Drone K."/>
            <person name="Cotton M."/>
            <person name="Joshu C."/>
            <person name="Antonoiu B."/>
            <person name="Zidanic M."/>
            <person name="Strong C."/>
            <person name="Sun H."/>
            <person name="Lamar B."/>
            <person name="Yordan C."/>
            <person name="Ma P."/>
            <person name="Zhong J."/>
            <person name="Preston R."/>
            <person name="Vil D."/>
            <person name="Shekher M."/>
            <person name="Matero A."/>
            <person name="Shah R."/>
            <person name="Swaby I.K."/>
            <person name="O'Shaughnessy A."/>
            <person name="Rodriguez M."/>
            <person name="Hoffman J."/>
            <person name="Till S."/>
            <person name="Granat S."/>
            <person name="Shohdy N."/>
            <person name="Hasegawa A."/>
            <person name="Hameed A."/>
            <person name="Lodhi M."/>
            <person name="Johnson A."/>
            <person name="Chen E."/>
            <person name="Marra M.A."/>
            <person name="Martienssen R."/>
            <person name="McCombie W.R."/>
        </authorList>
    </citation>
    <scope>NUCLEOTIDE SEQUENCE [LARGE SCALE GENOMIC DNA]</scope>
    <source>
        <strain>cv. Columbia</strain>
    </source>
</reference>
<reference key="2">
    <citation type="journal article" date="2017" name="Plant J.">
        <title>Araport11: a complete reannotation of the Arabidopsis thaliana reference genome.</title>
        <authorList>
            <person name="Cheng C.Y."/>
            <person name="Krishnakumar V."/>
            <person name="Chan A.P."/>
            <person name="Thibaud-Nissen F."/>
            <person name="Schobel S."/>
            <person name="Town C.D."/>
        </authorList>
    </citation>
    <scope>GENOME REANNOTATION</scope>
    <source>
        <strain>cv. Columbia</strain>
    </source>
</reference>
<reference key="3">
    <citation type="journal article" date="2003" name="Science">
        <title>Empirical analysis of transcriptional activity in the Arabidopsis genome.</title>
        <authorList>
            <person name="Yamada K."/>
            <person name="Lim J."/>
            <person name="Dale J.M."/>
            <person name="Chen H."/>
            <person name="Shinn P."/>
            <person name="Palm C.J."/>
            <person name="Southwick A.M."/>
            <person name="Wu H.C."/>
            <person name="Kim C.J."/>
            <person name="Nguyen M."/>
            <person name="Pham P.K."/>
            <person name="Cheuk R.F."/>
            <person name="Karlin-Newmann G."/>
            <person name="Liu S.X."/>
            <person name="Lam B."/>
            <person name="Sakano H."/>
            <person name="Wu T."/>
            <person name="Yu G."/>
            <person name="Miranda M."/>
            <person name="Quach H.L."/>
            <person name="Tripp M."/>
            <person name="Chang C.H."/>
            <person name="Lee J.M."/>
            <person name="Toriumi M.J."/>
            <person name="Chan M.M."/>
            <person name="Tang C.C."/>
            <person name="Onodera C.S."/>
            <person name="Deng J.M."/>
            <person name="Akiyama K."/>
            <person name="Ansari Y."/>
            <person name="Arakawa T."/>
            <person name="Banh J."/>
            <person name="Banno F."/>
            <person name="Bowser L."/>
            <person name="Brooks S.Y."/>
            <person name="Carninci P."/>
            <person name="Chao Q."/>
            <person name="Choy N."/>
            <person name="Enju A."/>
            <person name="Goldsmith A.D."/>
            <person name="Gurjal M."/>
            <person name="Hansen N.F."/>
            <person name="Hayashizaki Y."/>
            <person name="Johnson-Hopson C."/>
            <person name="Hsuan V.W."/>
            <person name="Iida K."/>
            <person name="Karnes M."/>
            <person name="Khan S."/>
            <person name="Koesema E."/>
            <person name="Ishida J."/>
            <person name="Jiang P.X."/>
            <person name="Jones T."/>
            <person name="Kawai J."/>
            <person name="Kamiya A."/>
            <person name="Meyers C."/>
            <person name="Nakajima M."/>
            <person name="Narusaka M."/>
            <person name="Seki M."/>
            <person name="Sakurai T."/>
            <person name="Satou M."/>
            <person name="Tamse R."/>
            <person name="Vaysberg M."/>
            <person name="Wallender E.K."/>
            <person name="Wong C."/>
            <person name="Yamamura Y."/>
            <person name="Yuan S."/>
            <person name="Shinozaki K."/>
            <person name="Davis R.W."/>
            <person name="Theologis A."/>
            <person name="Ecker J.R."/>
        </authorList>
    </citation>
    <scope>NUCLEOTIDE SEQUENCE [LARGE SCALE MRNA]</scope>
    <source>
        <strain>cv. Columbia</strain>
    </source>
</reference>
<reference key="4">
    <citation type="journal article" date="1999" name="Plant Mol. Biol.">
        <title>A multi-responsive gene encoding 1-aminocyclopropane-1-carboxylate synthase (ACS6) in mature Arabidopsis leaves.</title>
        <authorList>
            <person name="Arteca J.M."/>
            <person name="Arteca R.N."/>
        </authorList>
    </citation>
    <scope>NUCLEOTIDE SEQUENCE [MRNA] OF 30-495</scope>
    <scope>INDUCTION</scope>
    <source>
        <strain>cv. Columbia</strain>
    </source>
</reference>
<reference key="5">
    <citation type="journal article" date="1998" name="Physiol. Plantarum">
        <title>Induction of an ACC synthase cDNA by ozone in light-grown Arabidopsis thaliana leaves.</title>
        <authorList>
            <person name="Vahala J."/>
            <person name="Schlagnhaufer C.D."/>
            <person name="Pell E.J."/>
        </authorList>
    </citation>
    <scope>NUCLEOTIDE SEQUENCE [MRNA] OF 53-418</scope>
    <scope>INDUCTION</scope>
</reference>
<reference key="6">
    <citation type="journal article" date="2003" name="J. Biol. Chem.">
        <title>Biochemical diversity among the 1-amino-cyclopropane-1-carboxylate synthase isozymes encoded by the Arabidopsis gene family.</title>
        <authorList>
            <person name="Yamagami T."/>
            <person name="Tsuchisaka A."/>
            <person name="Yamada K."/>
            <person name="Haddon W.F."/>
            <person name="Harden L.A."/>
            <person name="Theologis A."/>
        </authorList>
    </citation>
    <scope>ENZYME ACTIVITY</scope>
    <scope>TISSUE SPECIFICITY</scope>
    <scope>INDUCTION</scope>
    <scope>PUTATIVE PROTEOLYTIC PROCESSING</scope>
</reference>
<reference key="7">
    <citation type="journal article" date="2004" name="Plant Cell">
        <title>Phosphorylation of 1-aminocyclopropane-1-carboxylic acid synthase by MPK6, a stress-responsive mitogen-activated protein kinase, induces ethylene biosynthesis in Arabidopsis.</title>
        <authorList>
            <person name="Liu Y."/>
            <person name="Zhang S."/>
        </authorList>
    </citation>
    <scope>FUNCTION</scope>
    <scope>PHOSPHORYLATION AT SER-480; SER-483 AND SER-488</scope>
    <scope>MUTAGENESIS OF SER-480; SER-483 AND SER-488</scope>
</reference>
<reference key="8">
    <citation type="journal article" date="2014" name="Plant Cell">
        <title>The Arabidopsis 14-3-3 protein RARE COLD INDUCIBLE 1A links low-temperature response and ethylene biosynthesis to regulate freezing tolerance and cold acclimation.</title>
        <authorList>
            <person name="Catala R."/>
            <person name="Lopez-Cobollo R."/>
            <person name="Mar Castellano M."/>
            <person name="Angosto T."/>
            <person name="Alonso J.M."/>
            <person name="Ecker J.R."/>
            <person name="Salinas J."/>
        </authorList>
    </citation>
    <scope>INTERACTION WITH GRF3</scope>
</reference>
<evidence type="ECO:0000250" key="1"/>
<evidence type="ECO:0000269" key="2">
    <source>
    </source>
</evidence>
<evidence type="ECO:0000269" key="3">
    <source>
    </source>
</evidence>
<evidence type="ECO:0000269" key="4">
    <source>
    </source>
</evidence>
<evidence type="ECO:0000269" key="5">
    <source>
    </source>
</evidence>
<evidence type="ECO:0000269" key="6">
    <source ref="5"/>
</evidence>
<evidence type="ECO:0000305" key="7"/>
<gene>
    <name type="primary">ACS6</name>
    <name type="synonym">ACC6</name>
    <name type="ordered locus">At4g11280</name>
    <name type="ORF">F8L21.70</name>
</gene>
<keyword id="KW-0266">Ethylene biosynthesis</keyword>
<keyword id="KW-0292">Fruit ripening</keyword>
<keyword id="KW-0456">Lyase</keyword>
<keyword id="KW-0597">Phosphoprotein</keyword>
<keyword id="KW-0611">Plant defense</keyword>
<keyword id="KW-0663">Pyridoxal phosphate</keyword>
<keyword id="KW-1185">Reference proteome</keyword>
<keyword id="KW-0949">S-adenosyl-L-methionine</keyword>
<protein>
    <recommendedName>
        <fullName>1-aminocyclopropane-1-carboxylate synthase 6</fullName>
        <shortName>ACC synthase 6</shortName>
        <ecNumber>4.4.1.14</ecNumber>
    </recommendedName>
    <alternativeName>
        <fullName>S-adenosyl-L-methionine methylthioadenosine-lyase 6</fullName>
    </alternativeName>
</protein>
<comment type="function">
    <text evidence="4">1-aminocyclopropane-1-carboxylate synthase (ACS) enzymes catalyze the conversion of S-adenosyl-L-methionine (SAM) into 1-aminocyclopropane-1-carboxylate (ACC), a direct precursor of ethylene. Involved in bacterial flagellin-induced ethylene production.</text>
</comment>
<comment type="catalytic activity">
    <reaction evidence="3">
        <text>S-adenosyl-L-methionine = 1-aminocyclopropane-1-carboxylate + S-methyl-5'-thioadenosine + H(+)</text>
        <dbReference type="Rhea" id="RHEA:21744"/>
        <dbReference type="ChEBI" id="CHEBI:15378"/>
        <dbReference type="ChEBI" id="CHEBI:17509"/>
        <dbReference type="ChEBI" id="CHEBI:58360"/>
        <dbReference type="ChEBI" id="CHEBI:59789"/>
        <dbReference type="EC" id="4.4.1.14"/>
    </reaction>
</comment>
<comment type="cofactor">
    <cofactor>
        <name>pyridoxal 5'-phosphate</name>
        <dbReference type="ChEBI" id="CHEBI:597326"/>
    </cofactor>
</comment>
<comment type="biophysicochemical properties">
    <kinetics>
        <KM>23 uM for AdoMet</KM>
        <Vmax>120.6 uM/h/mg enzyme</Vmax>
    </kinetics>
    <phDependence>
        <text>Optimum pH is 7.3.</text>
    </phDependence>
</comment>
<comment type="pathway">
    <text>Alkene biosynthesis; ethylene biosynthesis via S-adenosyl-L-methionine; ethylene from S-adenosyl-L-methionine: step 1/2.</text>
</comment>
<comment type="subunit">
    <text evidence="1 5">Homodimer and heterodimer. In vivo, the relevance of heterodimerization with other ACS enzymes is however unsure (By similarity). Interacts with GRF3.</text>
</comment>
<comment type="interaction">
    <interactant intactId="EBI-2356658">
        <id>Q9SAR0</id>
    </interactant>
    <interactant intactId="EBI-2436015">
        <id>Q43309</id>
        <label>ACS4</label>
    </interactant>
    <organismsDiffer>false</organismsDiffer>
    <experiments>2</experiments>
</comment>
<comment type="interaction">
    <interactant intactId="EBI-2356658">
        <id>Q9SAR0</id>
    </interactant>
    <interactant intactId="EBI-2356658">
        <id>Q9SAR0</id>
        <label>ACS6</label>
    </interactant>
    <organismsDiffer>false</organismsDiffer>
    <experiments>3</experiments>
</comment>
<comment type="tissue specificity">
    <text evidence="3">Expressed in roots and flowers.</text>
</comment>
<comment type="induction">
    <text evidence="2 3 6">By indole-3-acetic acid (IAA) and cycloheximide (CHX). By auxin. By treatment with ozone.</text>
</comment>
<comment type="PTM">
    <text evidence="4">Phosphorylated on serine residue by MAP kinase (MPK6).</text>
</comment>
<comment type="PTM">
    <text>May be processed at its C-terminus.</text>
</comment>
<comment type="miscellaneous">
    <text>The stability of ACS proteins, and the regulation of such stability, play a central role in ethylene biosynthesis. The phosphorylation of serine residues on the C-terminus increases protein stability.</text>
</comment>
<comment type="similarity">
    <text evidence="7">Belongs to the class-I pyridoxal-phosphate-dependent aminotransferase family.</text>
</comment>
<proteinExistence type="evidence at protein level"/>
<organism>
    <name type="scientific">Arabidopsis thaliana</name>
    <name type="common">Mouse-ear cress</name>
    <dbReference type="NCBI Taxonomy" id="3702"/>
    <lineage>
        <taxon>Eukaryota</taxon>
        <taxon>Viridiplantae</taxon>
        <taxon>Streptophyta</taxon>
        <taxon>Embryophyta</taxon>
        <taxon>Tracheophyta</taxon>
        <taxon>Spermatophyta</taxon>
        <taxon>Magnoliopsida</taxon>
        <taxon>eudicotyledons</taxon>
        <taxon>Gunneridae</taxon>
        <taxon>Pentapetalae</taxon>
        <taxon>rosids</taxon>
        <taxon>malvids</taxon>
        <taxon>Brassicales</taxon>
        <taxon>Brassicaceae</taxon>
        <taxon>Camelineae</taxon>
        <taxon>Arabidopsis</taxon>
    </lineage>
</organism>
<name>1A16_ARATH</name>
<sequence length="495" mass="55524">MVAFATEKKQDLNLLSKIASGDGHGENSSYFDGWKAYEENPFHPIDRPDGVIQMGLAENQLCGDLMRKWVLKHPEASICTSEGVNQFSDIAIFQDYHGLPEFRQAVAKFMEKTRNNKVKFDPDRIVMSGGATGAHETVAFCLANPGDGFLVPTPYYPGFDRDLRWRTGVNLVPVTCHSSNGFKITVEALEAAYENARKSNIPVKGLLVTNPSNPLGTTLDRECLKSLVNFTNDKGIHLIADEIYAATTFGQSEFISVAEVIEEIEDCNRDLIHIVYSLSKDMGLPGLRVGIVYSYNDRVVQIARKMSSFGLVSSQTQHLIAKMLSDEEFVDEFIRESKLRLAARHAEITTGLDGLGIGWLKAKAGLFLWMDLRNLLKTATFDSETELWRVIVHQVKLNVSPGGSFHCHEPGWFRVCFANMDHKTMETALERIRVFTSQLEEETKPMAATTMMAKKKKKCWQSNLRLSFSDTRRFDDGFFSPHSPVPPSPLVRAQT</sequence>
<accession>Q9SAR0</accession>
<accession>O82719</accession>
<accession>Q9SUT3</accession>
<dbReference type="EC" id="4.4.1.14"/>
<dbReference type="EMBL" id="AL096882">
    <property type="protein sequence ID" value="CAB51412.1"/>
    <property type="molecule type" value="Genomic_DNA"/>
</dbReference>
<dbReference type="EMBL" id="AL161531">
    <property type="protein sequence ID" value="CAB81229.1"/>
    <property type="molecule type" value="Genomic_DNA"/>
</dbReference>
<dbReference type="EMBL" id="CP002687">
    <property type="protein sequence ID" value="AEE82992.1"/>
    <property type="molecule type" value="Genomic_DNA"/>
</dbReference>
<dbReference type="EMBL" id="AF361097">
    <property type="protein sequence ID" value="AAK27237.1"/>
    <property type="molecule type" value="mRNA"/>
</dbReference>
<dbReference type="EMBL" id="AF428292">
    <property type="protein sequence ID" value="AAL16124.1"/>
    <property type="molecule type" value="mRNA"/>
</dbReference>
<dbReference type="EMBL" id="BT000487">
    <property type="protein sequence ID" value="AAN18056.1"/>
    <property type="molecule type" value="mRNA"/>
</dbReference>
<dbReference type="EMBL" id="U73786">
    <property type="protein sequence ID" value="AAC63850.1"/>
    <property type="molecule type" value="mRNA"/>
</dbReference>
<dbReference type="EMBL" id="U79524">
    <property type="protein sequence ID" value="AAC32251.1"/>
    <property type="molecule type" value="mRNA"/>
</dbReference>
<dbReference type="PIR" id="T13019">
    <property type="entry name" value="T13019"/>
</dbReference>
<dbReference type="RefSeq" id="NP_192867.1">
    <property type="nucleotide sequence ID" value="NM_117199.2"/>
</dbReference>
<dbReference type="SMR" id="Q9SAR0"/>
<dbReference type="BioGRID" id="12029">
    <property type="interactions" value="4"/>
</dbReference>
<dbReference type="FunCoup" id="Q9SAR0">
    <property type="interactions" value="436"/>
</dbReference>
<dbReference type="IntAct" id="Q9SAR0">
    <property type="interactions" value="4"/>
</dbReference>
<dbReference type="STRING" id="3702.Q9SAR0"/>
<dbReference type="iPTMnet" id="Q9SAR0"/>
<dbReference type="PaxDb" id="3702-AT4G11280.1"/>
<dbReference type="EnsemblPlants" id="AT4G11280.1">
    <property type="protein sequence ID" value="AT4G11280.1"/>
    <property type="gene ID" value="AT4G11280"/>
</dbReference>
<dbReference type="GeneID" id="826730"/>
<dbReference type="Gramene" id="AT4G11280.1">
    <property type="protein sequence ID" value="AT4G11280.1"/>
    <property type="gene ID" value="AT4G11280"/>
</dbReference>
<dbReference type="KEGG" id="ath:AT4G11280"/>
<dbReference type="Araport" id="AT4G11280"/>
<dbReference type="TAIR" id="AT4G11280">
    <property type="gene designation" value="ACS6"/>
</dbReference>
<dbReference type="eggNOG" id="KOG0256">
    <property type="taxonomic scope" value="Eukaryota"/>
</dbReference>
<dbReference type="HOGENOM" id="CLU_017584_1_0_1"/>
<dbReference type="InParanoid" id="Q9SAR0"/>
<dbReference type="OMA" id="KIPWRYA"/>
<dbReference type="OrthoDB" id="691673at2759"/>
<dbReference type="PhylomeDB" id="Q9SAR0"/>
<dbReference type="BRENDA" id="4.4.1.14">
    <property type="organism ID" value="399"/>
</dbReference>
<dbReference type="SABIO-RK" id="Q9SAR0"/>
<dbReference type="UniPathway" id="UPA00384">
    <property type="reaction ID" value="UER00562"/>
</dbReference>
<dbReference type="PRO" id="PR:Q9SAR0"/>
<dbReference type="Proteomes" id="UP000006548">
    <property type="component" value="Chromosome 4"/>
</dbReference>
<dbReference type="ExpressionAtlas" id="Q9SAR0">
    <property type="expression patterns" value="baseline and differential"/>
</dbReference>
<dbReference type="GO" id="GO:0016847">
    <property type="term" value="F:1-aminocyclopropane-1-carboxylate synthase activity"/>
    <property type="evidence" value="ECO:0000314"/>
    <property type="project" value="TAIR"/>
</dbReference>
<dbReference type="GO" id="GO:0042802">
    <property type="term" value="F:identical protein binding"/>
    <property type="evidence" value="ECO:0000353"/>
    <property type="project" value="IntAct"/>
</dbReference>
<dbReference type="GO" id="GO:0030170">
    <property type="term" value="F:pyridoxal phosphate binding"/>
    <property type="evidence" value="ECO:0007669"/>
    <property type="project" value="InterPro"/>
</dbReference>
<dbReference type="GO" id="GO:0051301">
    <property type="term" value="P:cell division"/>
    <property type="evidence" value="ECO:0000270"/>
    <property type="project" value="TAIR"/>
</dbReference>
<dbReference type="GO" id="GO:0006952">
    <property type="term" value="P:defense response"/>
    <property type="evidence" value="ECO:0007669"/>
    <property type="project" value="UniProtKB-KW"/>
</dbReference>
<dbReference type="GO" id="GO:0009693">
    <property type="term" value="P:ethylene biosynthetic process"/>
    <property type="evidence" value="ECO:0000304"/>
    <property type="project" value="TAIR"/>
</dbReference>
<dbReference type="GO" id="GO:0009835">
    <property type="term" value="P:fruit ripening"/>
    <property type="evidence" value="ECO:0007669"/>
    <property type="project" value="UniProtKB-KW"/>
</dbReference>
<dbReference type="GO" id="GO:0010087">
    <property type="term" value="P:phloem or xylem histogenesis"/>
    <property type="evidence" value="ECO:0000270"/>
    <property type="project" value="TAIR"/>
</dbReference>
<dbReference type="GO" id="GO:0009733">
    <property type="term" value="P:response to auxin"/>
    <property type="evidence" value="ECO:0000270"/>
    <property type="project" value="TAIR"/>
</dbReference>
<dbReference type="GO" id="GO:0009753">
    <property type="term" value="P:response to jasmonic acid"/>
    <property type="evidence" value="ECO:0000270"/>
    <property type="project" value="TAIR"/>
</dbReference>
<dbReference type="GO" id="GO:0009612">
    <property type="term" value="P:response to mechanical stimulus"/>
    <property type="evidence" value="ECO:0000270"/>
    <property type="project" value="TAIR"/>
</dbReference>
<dbReference type="GO" id="GO:0006979">
    <property type="term" value="P:response to oxidative stress"/>
    <property type="evidence" value="ECO:0000270"/>
    <property type="project" value="TAIR"/>
</dbReference>
<dbReference type="GO" id="GO:0009611">
    <property type="term" value="P:response to wounding"/>
    <property type="evidence" value="ECO:0000270"/>
    <property type="project" value="TAIR"/>
</dbReference>
<dbReference type="CDD" id="cd00609">
    <property type="entry name" value="AAT_like"/>
    <property type="match status" value="1"/>
</dbReference>
<dbReference type="FunFam" id="3.40.640.10:FF:000051">
    <property type="entry name" value="1-aminocyclopropane-1-carboxylate synthase 3"/>
    <property type="match status" value="1"/>
</dbReference>
<dbReference type="Gene3D" id="3.90.1150.10">
    <property type="entry name" value="Aspartate Aminotransferase, domain 1"/>
    <property type="match status" value="1"/>
</dbReference>
<dbReference type="Gene3D" id="3.40.640.10">
    <property type="entry name" value="Type I PLP-dependent aspartate aminotransferase-like (Major domain)"/>
    <property type="match status" value="1"/>
</dbReference>
<dbReference type="InterPro" id="IPR004839">
    <property type="entry name" value="Aminotransferase_I/II_large"/>
</dbReference>
<dbReference type="InterPro" id="IPR050478">
    <property type="entry name" value="Ethylene_sulfur-biosynth"/>
</dbReference>
<dbReference type="InterPro" id="IPR004838">
    <property type="entry name" value="NHTrfase_class1_PyrdxlP-BS"/>
</dbReference>
<dbReference type="InterPro" id="IPR015424">
    <property type="entry name" value="PyrdxlP-dep_Trfase"/>
</dbReference>
<dbReference type="InterPro" id="IPR015421">
    <property type="entry name" value="PyrdxlP-dep_Trfase_major"/>
</dbReference>
<dbReference type="InterPro" id="IPR015422">
    <property type="entry name" value="PyrdxlP-dep_Trfase_small"/>
</dbReference>
<dbReference type="PANTHER" id="PTHR43795:SF6">
    <property type="entry name" value="1-AMINOCYCLOPROPANE-1-CARBOXYLATE SYNTHASE 6"/>
    <property type="match status" value="1"/>
</dbReference>
<dbReference type="PANTHER" id="PTHR43795">
    <property type="entry name" value="BIFUNCTIONAL ASPARTATE AMINOTRANSFERASE AND GLUTAMATE/ASPARTATE-PREPHENATE AMINOTRANSFERASE-RELATED"/>
    <property type="match status" value="1"/>
</dbReference>
<dbReference type="Pfam" id="PF00155">
    <property type="entry name" value="Aminotran_1_2"/>
    <property type="match status" value="1"/>
</dbReference>
<dbReference type="PRINTS" id="PR00753">
    <property type="entry name" value="ACCSYNTHASE"/>
</dbReference>
<dbReference type="SUPFAM" id="SSF53383">
    <property type="entry name" value="PLP-dependent transferases"/>
    <property type="match status" value="1"/>
</dbReference>
<dbReference type="PROSITE" id="PS00105">
    <property type="entry name" value="AA_TRANSFER_CLASS_1"/>
    <property type="match status" value="1"/>
</dbReference>
<feature type="chain" id="PRO_0000123900" description="1-aminocyclopropane-1-carboxylate synthase 6">
    <location>
        <begin position="1"/>
        <end position="495"/>
    </location>
</feature>
<feature type="binding site" evidence="1">
    <location>
        <position position="58"/>
    </location>
    <ligand>
        <name>substrate</name>
    </ligand>
</feature>
<feature type="binding site" evidence="1">
    <location>
        <position position="96"/>
    </location>
    <ligand>
        <name>substrate</name>
    </ligand>
</feature>
<feature type="modified residue" description="N6-(pyridoxal phosphate)lysine" evidence="1">
    <location>
        <position position="280"/>
    </location>
</feature>
<feature type="modified residue" description="Phosphoserine" evidence="4">
    <location>
        <position position="480"/>
    </location>
</feature>
<feature type="modified residue" description="Phosphoserine" evidence="4">
    <location>
        <position position="483"/>
    </location>
</feature>
<feature type="modified residue" description="Phosphoserine" evidence="4">
    <location>
        <position position="488"/>
    </location>
</feature>
<feature type="mutagenesis site" description="40-fold increase in ethylene production; when associated with D-483 and D-488." evidence="4">
    <original>S</original>
    <variation>D</variation>
    <location>
        <position position="480"/>
    </location>
</feature>
<feature type="mutagenesis site" description="40-fold increase in ethylene production; when associated with D-480 and D-488." evidence="4">
    <original>S</original>
    <variation>D</variation>
    <location>
        <position position="483"/>
    </location>
</feature>
<feature type="mutagenesis site" description="40-fold increase in ethylene production; when associated with D-480 and D-483." evidence="4">
    <original>S</original>
    <variation>D</variation>
    <location>
        <position position="488"/>
    </location>
</feature>
<feature type="sequence conflict" description="In Ref. 5; AAC32251." evidence="7" ref="5">
    <original>L</original>
    <variation>F</variation>
    <location>
        <position position="56"/>
    </location>
</feature>
<feature type="sequence conflict" description="In Ref. 4; AAC63850." evidence="7" ref="4">
    <original>R</original>
    <variation>K</variation>
    <location>
        <position position="433"/>
    </location>
</feature>